<sequence>MKNKLPPFIEIYRALIATPSISATEEALDQSNADLITLLADWFKDLGFNVEVQPVPGTRNKFNMLASIGQGAGGLLLAGHTDTVPFDDGRWTRDPFTLTEHDGKLYGLGTADMKGFFAFILDALRDVDVTKLKKPLYILATADEETSMAGARYFAETTALRPDCAIIGEPTSLQPVRAHKGHISNAIRIQGQSGHSSDPARGVNAIELMHDAIGHILQLRDNLKERYHYEAFTVPYPTLNLGHIHGGDASNRICACCELHMDIRPLPGMTLNELNGLLNDALAPVSERWPGRLTVDELHPPIPGYECPPNHQLVEVVEKLLGAKTEVVNYCTEAPFIQTLCPTLVLGPGSINQAHQPDEYLETRFIKPTRELITQVIHHFCWH</sequence>
<protein>
    <recommendedName>
        <fullName evidence="1">Acetylornithine deacetylase</fullName>
        <shortName evidence="1">AO</shortName>
        <shortName evidence="1">Acetylornithinase</shortName>
        <ecNumber evidence="1">3.5.1.16</ecNumber>
    </recommendedName>
    <alternativeName>
        <fullName evidence="1">N-acetylornithinase</fullName>
        <shortName evidence="1">NAO</shortName>
    </alternativeName>
</protein>
<evidence type="ECO:0000255" key="1">
    <source>
        <dbReference type="HAMAP-Rule" id="MF_01108"/>
    </source>
</evidence>
<gene>
    <name evidence="1" type="primary">argE</name>
    <name type="ordered locus">ECDH10B_4145</name>
</gene>
<accession>B1XBC2</accession>
<organism>
    <name type="scientific">Escherichia coli (strain K12 / DH10B)</name>
    <dbReference type="NCBI Taxonomy" id="316385"/>
    <lineage>
        <taxon>Bacteria</taxon>
        <taxon>Pseudomonadati</taxon>
        <taxon>Pseudomonadota</taxon>
        <taxon>Gammaproteobacteria</taxon>
        <taxon>Enterobacterales</taxon>
        <taxon>Enterobacteriaceae</taxon>
        <taxon>Escherichia</taxon>
    </lineage>
</organism>
<keyword id="KW-0028">Amino-acid biosynthesis</keyword>
<keyword id="KW-0055">Arginine biosynthesis</keyword>
<keyword id="KW-0170">Cobalt</keyword>
<keyword id="KW-0963">Cytoplasm</keyword>
<keyword id="KW-0378">Hydrolase</keyword>
<keyword id="KW-0479">Metal-binding</keyword>
<keyword id="KW-0862">Zinc</keyword>
<proteinExistence type="inferred from homology"/>
<dbReference type="EC" id="3.5.1.16" evidence="1"/>
<dbReference type="EMBL" id="CP000948">
    <property type="protein sequence ID" value="ACB04968.1"/>
    <property type="molecule type" value="Genomic_DNA"/>
</dbReference>
<dbReference type="RefSeq" id="WP_001298964.1">
    <property type="nucleotide sequence ID" value="NC_010473.1"/>
</dbReference>
<dbReference type="SMR" id="B1XBC2"/>
<dbReference type="MEROPS" id="M20.974"/>
<dbReference type="KEGG" id="ecd:ECDH10B_4145"/>
<dbReference type="HOGENOM" id="CLU_021802_2_4_6"/>
<dbReference type="UniPathway" id="UPA00068">
    <property type="reaction ID" value="UER00110"/>
</dbReference>
<dbReference type="GO" id="GO:0005737">
    <property type="term" value="C:cytoplasm"/>
    <property type="evidence" value="ECO:0007669"/>
    <property type="project" value="UniProtKB-SubCell"/>
</dbReference>
<dbReference type="GO" id="GO:0008777">
    <property type="term" value="F:acetylornithine deacetylase activity"/>
    <property type="evidence" value="ECO:0007669"/>
    <property type="project" value="UniProtKB-UniRule"/>
</dbReference>
<dbReference type="GO" id="GO:0008270">
    <property type="term" value="F:zinc ion binding"/>
    <property type="evidence" value="ECO:0007669"/>
    <property type="project" value="UniProtKB-UniRule"/>
</dbReference>
<dbReference type="GO" id="GO:0006526">
    <property type="term" value="P:L-arginine biosynthetic process"/>
    <property type="evidence" value="ECO:0007669"/>
    <property type="project" value="UniProtKB-UniRule"/>
</dbReference>
<dbReference type="CDD" id="cd03894">
    <property type="entry name" value="M20_ArgE"/>
    <property type="match status" value="1"/>
</dbReference>
<dbReference type="FunFam" id="3.30.70.360:FF:000003">
    <property type="entry name" value="Acetylornithine deacetylase"/>
    <property type="match status" value="1"/>
</dbReference>
<dbReference type="Gene3D" id="3.30.70.360">
    <property type="match status" value="1"/>
</dbReference>
<dbReference type="Gene3D" id="3.40.630.10">
    <property type="entry name" value="Zn peptidases"/>
    <property type="match status" value="1"/>
</dbReference>
<dbReference type="HAMAP" id="MF_01108">
    <property type="entry name" value="ArgE"/>
    <property type="match status" value="1"/>
</dbReference>
<dbReference type="InterPro" id="IPR010169">
    <property type="entry name" value="AcOrn-deacetyl"/>
</dbReference>
<dbReference type="InterPro" id="IPR001261">
    <property type="entry name" value="ArgE/DapE_CS"/>
</dbReference>
<dbReference type="InterPro" id="IPR036264">
    <property type="entry name" value="Bact_exopeptidase_dim_dom"/>
</dbReference>
<dbReference type="InterPro" id="IPR002933">
    <property type="entry name" value="Peptidase_M20"/>
</dbReference>
<dbReference type="InterPro" id="IPR011650">
    <property type="entry name" value="Peptidase_M20_dimer"/>
</dbReference>
<dbReference type="InterPro" id="IPR050072">
    <property type="entry name" value="Peptidase_M20A"/>
</dbReference>
<dbReference type="NCBIfam" id="TIGR01892">
    <property type="entry name" value="AcOrn-deacetyl"/>
    <property type="match status" value="1"/>
</dbReference>
<dbReference type="NCBIfam" id="NF003474">
    <property type="entry name" value="PRK05111.1"/>
    <property type="match status" value="1"/>
</dbReference>
<dbReference type="PANTHER" id="PTHR43808">
    <property type="entry name" value="ACETYLORNITHINE DEACETYLASE"/>
    <property type="match status" value="1"/>
</dbReference>
<dbReference type="PANTHER" id="PTHR43808:SF1">
    <property type="entry name" value="ACETYLORNITHINE DEACETYLASE"/>
    <property type="match status" value="1"/>
</dbReference>
<dbReference type="Pfam" id="PF07687">
    <property type="entry name" value="M20_dimer"/>
    <property type="match status" value="1"/>
</dbReference>
<dbReference type="Pfam" id="PF01546">
    <property type="entry name" value="Peptidase_M20"/>
    <property type="match status" value="1"/>
</dbReference>
<dbReference type="SUPFAM" id="SSF55031">
    <property type="entry name" value="Bacterial exopeptidase dimerisation domain"/>
    <property type="match status" value="1"/>
</dbReference>
<dbReference type="SUPFAM" id="SSF53187">
    <property type="entry name" value="Zn-dependent exopeptidases"/>
    <property type="match status" value="1"/>
</dbReference>
<dbReference type="PROSITE" id="PS00758">
    <property type="entry name" value="ARGE_DAPE_CPG2_1"/>
    <property type="match status" value="1"/>
</dbReference>
<dbReference type="PROSITE" id="PS00759">
    <property type="entry name" value="ARGE_DAPE_CPG2_2"/>
    <property type="match status" value="1"/>
</dbReference>
<reference key="1">
    <citation type="journal article" date="2008" name="J. Bacteriol.">
        <title>The complete genome sequence of Escherichia coli DH10B: insights into the biology of a laboratory workhorse.</title>
        <authorList>
            <person name="Durfee T."/>
            <person name="Nelson R."/>
            <person name="Baldwin S."/>
            <person name="Plunkett G. III"/>
            <person name="Burland V."/>
            <person name="Mau B."/>
            <person name="Petrosino J.F."/>
            <person name="Qin X."/>
            <person name="Muzny D.M."/>
            <person name="Ayele M."/>
            <person name="Gibbs R.A."/>
            <person name="Csorgo B."/>
            <person name="Posfai G."/>
            <person name="Weinstock G.M."/>
            <person name="Blattner F.R."/>
        </authorList>
    </citation>
    <scope>NUCLEOTIDE SEQUENCE [LARGE SCALE GENOMIC DNA]</scope>
    <source>
        <strain>K12 / DH10B</strain>
    </source>
</reference>
<name>ARGE_ECODH</name>
<comment type="function">
    <text evidence="1">Catalyzes the hydrolysis of the amide bond of N(2)-acetylated L-amino acids. Cleaves the acetyl group from N-acetyl-L-ornithine to form L-ornithine, an intermediate in L-arginine biosynthesis pathway, and a branchpoint in the synthesis of polyamines.</text>
</comment>
<comment type="catalytic activity">
    <reaction evidence="1">
        <text>N(2)-acetyl-L-ornithine + H2O = L-ornithine + acetate</text>
        <dbReference type="Rhea" id="RHEA:15941"/>
        <dbReference type="ChEBI" id="CHEBI:15377"/>
        <dbReference type="ChEBI" id="CHEBI:30089"/>
        <dbReference type="ChEBI" id="CHEBI:46911"/>
        <dbReference type="ChEBI" id="CHEBI:57805"/>
        <dbReference type="EC" id="3.5.1.16"/>
    </reaction>
</comment>
<comment type="cofactor">
    <cofactor evidence="1">
        <name>Zn(2+)</name>
        <dbReference type="ChEBI" id="CHEBI:29105"/>
    </cofactor>
    <cofactor evidence="1">
        <name>Co(2+)</name>
        <dbReference type="ChEBI" id="CHEBI:48828"/>
    </cofactor>
    <text evidence="1">Binds 2 Zn(2+) or Co(2+) ions per subunit.</text>
</comment>
<comment type="cofactor">
    <cofactor evidence="1">
        <name>glutathione</name>
        <dbReference type="ChEBI" id="CHEBI:57925"/>
    </cofactor>
</comment>
<comment type="pathway">
    <text evidence="1">Amino-acid biosynthesis; L-arginine biosynthesis; L-ornithine from N(2)-acetyl-L-ornithine (linear): step 1/1.</text>
</comment>
<comment type="subunit">
    <text evidence="1">Homodimer.</text>
</comment>
<comment type="subcellular location">
    <subcellularLocation>
        <location evidence="1">Cytoplasm</location>
    </subcellularLocation>
</comment>
<comment type="similarity">
    <text evidence="1">Belongs to the peptidase M20A family. ArgE subfamily.</text>
</comment>
<feature type="chain" id="PRO_1000137065" description="Acetylornithine deacetylase">
    <location>
        <begin position="1"/>
        <end position="383"/>
    </location>
</feature>
<feature type="active site" evidence="1">
    <location>
        <position position="82"/>
    </location>
</feature>
<feature type="active site" evidence="1">
    <location>
        <position position="144"/>
    </location>
</feature>
<feature type="binding site" evidence="1">
    <location>
        <position position="80"/>
    </location>
    <ligand>
        <name>Zn(2+)</name>
        <dbReference type="ChEBI" id="CHEBI:29105"/>
        <label>1</label>
    </ligand>
</feature>
<feature type="binding site" evidence="1">
    <location>
        <position position="112"/>
    </location>
    <ligand>
        <name>Zn(2+)</name>
        <dbReference type="ChEBI" id="CHEBI:29105"/>
        <label>1</label>
    </ligand>
</feature>
<feature type="binding site" evidence="1">
    <location>
        <position position="112"/>
    </location>
    <ligand>
        <name>Zn(2+)</name>
        <dbReference type="ChEBI" id="CHEBI:29105"/>
        <label>2</label>
    </ligand>
</feature>
<feature type="binding site" evidence="1">
    <location>
        <position position="145"/>
    </location>
    <ligand>
        <name>Zn(2+)</name>
        <dbReference type="ChEBI" id="CHEBI:29105"/>
        <label>2</label>
    </ligand>
</feature>
<feature type="binding site" evidence="1">
    <location>
        <position position="169"/>
    </location>
    <ligand>
        <name>Zn(2+)</name>
        <dbReference type="ChEBI" id="CHEBI:29105"/>
        <label>1</label>
    </ligand>
</feature>
<feature type="binding site" evidence="1">
    <location>
        <position position="355"/>
    </location>
    <ligand>
        <name>Zn(2+)</name>
        <dbReference type="ChEBI" id="CHEBI:29105"/>
        <label>2</label>
    </ligand>
</feature>